<evidence type="ECO:0000255" key="1"/>
<evidence type="ECO:0000256" key="2">
    <source>
        <dbReference type="SAM" id="MobiDB-lite"/>
    </source>
</evidence>
<evidence type="ECO:0000305" key="3"/>
<sequence>MRVISRARSACTWTSCTSLSPCSTSCPPSPAAPTLLRRRSLPQQRRRPSSSPNRRVRGVTTSPCPTRSLVYKRRVGAPQRLCAETVATMQAQEANALLLSRMEALEWFKKFTVWLRVYAIFIFQLAFSFGLGSVFWLGFPQNRNFCVENYSFFLTVLVPIVCMFITYTLGNEHPSNATVLFIYLLANSLTAAIFQMCSESRVLVGSYVMTLALFISFTGLAFLGGRDRRRWKCISCVYVVMLLSFLTLALLSDADWLQKIVVTLCAFSISFFLGILAYDSLMVIFFCPPNQCIRHAVCLYLDSMAIFLTLLLMLSGPRWISLSDGAPLDNGTLTAASTTGKS</sequence>
<name>US20_HCMVA</name>
<accession>P09724</accession>
<accession>Q7M6H9</accession>
<gene>
    <name type="primary">US20</name>
</gene>
<feature type="chain" id="PRO_0000115281" description="Transmembrane protein HWLF3">
    <location>
        <begin position="1"/>
        <end position="342"/>
    </location>
</feature>
<feature type="transmembrane region" description="Helical" evidence="1">
    <location>
        <begin position="119"/>
        <end position="139"/>
    </location>
</feature>
<feature type="transmembrane region" description="Helical" evidence="1">
    <location>
        <begin position="150"/>
        <end position="170"/>
    </location>
</feature>
<feature type="transmembrane region" description="Helical" evidence="1">
    <location>
        <begin position="177"/>
        <end position="197"/>
    </location>
</feature>
<feature type="transmembrane region" description="Helical" evidence="1">
    <location>
        <begin position="202"/>
        <end position="222"/>
    </location>
</feature>
<feature type="transmembrane region" description="Helical" evidence="1">
    <location>
        <begin position="231"/>
        <end position="251"/>
    </location>
</feature>
<feature type="transmembrane region" description="Helical" evidence="1">
    <location>
        <begin position="266"/>
        <end position="286"/>
    </location>
</feature>
<feature type="transmembrane region" description="Helical" evidence="1">
    <location>
        <begin position="296"/>
        <end position="316"/>
    </location>
</feature>
<feature type="region of interest" description="Disordered" evidence="2">
    <location>
        <begin position="21"/>
        <end position="64"/>
    </location>
</feature>
<feature type="compositionally biased region" description="Basic residues" evidence="2">
    <location>
        <begin position="36"/>
        <end position="48"/>
    </location>
</feature>
<feature type="glycosylation site" description="N-linked (GlcNAc...) asparagine; by host" evidence="1">
    <location>
        <position position="149"/>
    </location>
</feature>
<feature type="glycosylation site" description="N-linked (GlcNAc...) asparagine; by host" evidence="1">
    <location>
        <position position="176"/>
    </location>
</feature>
<feature type="glycosylation site" description="N-linked (GlcNAc...) asparagine; by host" evidence="1">
    <location>
        <position position="330"/>
    </location>
</feature>
<dbReference type="EMBL" id="X04650">
    <property type="protein sequence ID" value="CAB37112.1"/>
    <property type="status" value="ALT_INIT"/>
    <property type="molecule type" value="Genomic_DNA"/>
</dbReference>
<dbReference type="EMBL" id="X17403">
    <property type="protein sequence ID" value="CAA35287.1"/>
    <property type="status" value="ALT_INIT"/>
    <property type="molecule type" value="Genomic_DNA"/>
</dbReference>
<dbReference type="EMBL" id="BK000394">
    <property type="protein sequence ID" value="DAA00209.1"/>
    <property type="status" value="ALT_INIT"/>
    <property type="molecule type" value="Genomic_DNA"/>
</dbReference>
<dbReference type="PIR" id="S09934">
    <property type="entry name" value="QQBEG4"/>
</dbReference>
<dbReference type="RefSeq" id="YP_081605.1">
    <property type="nucleotide sequence ID" value="NC_006273.2"/>
</dbReference>
<dbReference type="SMR" id="P09724"/>
<dbReference type="GlyCosmos" id="P09724">
    <property type="glycosylation" value="3 sites, No reported glycans"/>
</dbReference>
<dbReference type="DNASU" id="3077561"/>
<dbReference type="GeneID" id="3077561"/>
<dbReference type="KEGG" id="vg:3077561"/>
<dbReference type="Proteomes" id="UP000008991">
    <property type="component" value="Segment"/>
</dbReference>
<dbReference type="Proteomes" id="UP000008992">
    <property type="component" value="Segment"/>
</dbReference>
<dbReference type="GO" id="GO:0016020">
    <property type="term" value="C:membrane"/>
    <property type="evidence" value="ECO:0007669"/>
    <property type="project" value="UniProtKB-SubCell"/>
</dbReference>
<dbReference type="InterPro" id="IPR006214">
    <property type="entry name" value="Bax_inhibitor_1-related"/>
</dbReference>
<dbReference type="PANTHER" id="PTHR23291">
    <property type="entry name" value="BAX INHIBITOR-RELATED"/>
    <property type="match status" value="1"/>
</dbReference>
<dbReference type="PANTHER" id="PTHR23291:SF50">
    <property type="entry name" value="PROTEIN LIFEGUARD 4"/>
    <property type="match status" value="1"/>
</dbReference>
<dbReference type="Pfam" id="PF01027">
    <property type="entry name" value="Bax1-I"/>
    <property type="match status" value="1"/>
</dbReference>
<organismHost>
    <name type="scientific">Homo sapiens</name>
    <name type="common">Human</name>
    <dbReference type="NCBI Taxonomy" id="9606"/>
</organismHost>
<protein>
    <recommendedName>
        <fullName>Transmembrane protein HWLF3</fullName>
    </recommendedName>
</protein>
<comment type="subcellular location">
    <subcellularLocation>
        <location evidence="3">Membrane</location>
        <topology evidence="3">Multi-pass membrane protein</topology>
    </subcellularLocation>
</comment>
<comment type="similarity">
    <text evidence="3">Belongs to the cytomegalovirus US12 family.</text>
</comment>
<comment type="sequence caution" evidence="3">
    <conflict type="erroneous initiation">
        <sequence resource="EMBL-CDS" id="CAA35287"/>
    </conflict>
</comment>
<comment type="sequence caution" evidence="3">
    <conflict type="erroneous initiation">
        <sequence resource="EMBL-CDS" id="CAB37112"/>
    </conflict>
</comment>
<comment type="sequence caution" evidence="3">
    <conflict type="erroneous initiation">
        <sequence resource="EMBL-CDS" id="DAA00209"/>
    </conflict>
</comment>
<keyword id="KW-0325">Glycoprotein</keyword>
<keyword id="KW-0426">Late protein</keyword>
<keyword id="KW-0472">Membrane</keyword>
<keyword id="KW-1185">Reference proteome</keyword>
<keyword id="KW-0812">Transmembrane</keyword>
<keyword id="KW-1133">Transmembrane helix</keyword>
<organism>
    <name type="scientific">Human cytomegalovirus (strain AD169)</name>
    <name type="common">HHV-5</name>
    <name type="synonym">Human herpesvirus 5</name>
    <dbReference type="NCBI Taxonomy" id="10360"/>
    <lineage>
        <taxon>Viruses</taxon>
        <taxon>Duplodnaviria</taxon>
        <taxon>Heunggongvirae</taxon>
        <taxon>Peploviricota</taxon>
        <taxon>Herviviricetes</taxon>
        <taxon>Herpesvirales</taxon>
        <taxon>Orthoherpesviridae</taxon>
        <taxon>Betaherpesvirinae</taxon>
        <taxon>Cytomegalovirus</taxon>
        <taxon>Cytomegalovirus humanbeta5</taxon>
        <taxon>Human cytomegalovirus</taxon>
    </lineage>
</organism>
<proteinExistence type="inferred from homology"/>
<reference key="1">
    <citation type="journal article" date="1986" name="J. Mol. Biol.">
        <title>Sequence of the short unique region, short repeats, and part of the long repeats of human cytomegalovirus.</title>
        <authorList>
            <person name="Weston K.M."/>
            <person name="Barrell B.G."/>
        </authorList>
    </citation>
    <scope>NUCLEOTIDE SEQUENCE [GENOMIC DNA]</scope>
</reference>
<reference key="2">
    <citation type="journal article" date="1990" name="Curr. Top. Microbiol. Immunol.">
        <title>Analysis of the protein-coding content of the sequence of human cytomegalovirus strain AD169.</title>
        <authorList>
            <person name="Chee M.S."/>
            <person name="Bankier A.T."/>
            <person name="Beck S."/>
            <person name="Bohni R."/>
            <person name="Brown C.M."/>
            <person name="Cerny R."/>
            <person name="Horsnell T."/>
            <person name="Hutchison C.A. III"/>
            <person name="Kouzarides T."/>
            <person name="Martignetti J.A."/>
            <person name="Preddie E."/>
            <person name="Satchwell S.C."/>
            <person name="Tomlinson P."/>
            <person name="Weston K.M."/>
            <person name="Barrell B.G."/>
        </authorList>
    </citation>
    <scope>NUCLEOTIDE SEQUENCE [LARGE SCALE GENOMIC DNA]</scope>
</reference>
<reference key="3">
    <citation type="journal article" date="2003" name="J. Gen. Virol.">
        <title>The human cytomegalovirus genome revisited: comparison with the chimpanzee cytomegalovirus genome.</title>
        <authorList>
            <person name="Davison A.J."/>
            <person name="Dolan A."/>
            <person name="Akter P."/>
            <person name="Addison C."/>
            <person name="Dargan D.J."/>
            <person name="Alcendor D.J."/>
            <person name="McGeoch D.J."/>
            <person name="Hayward G.S."/>
        </authorList>
    </citation>
    <scope>GENOME REANNOTATION</scope>
</reference>
<reference key="4">
    <citation type="journal article" date="2003" name="J. Gen. Virol.">
        <authorList>
            <person name="Davison A.J."/>
            <person name="Dolan A."/>
            <person name="Akter P."/>
            <person name="Addison C."/>
            <person name="Dargan D.J."/>
            <person name="Alcendor D.J."/>
            <person name="McGeoch D.J."/>
            <person name="Hayward G.S."/>
        </authorList>
    </citation>
    <scope>ERRATUM OF PUBMED:12533697</scope>
</reference>